<gene>
    <name evidence="1" type="primary">xseB</name>
    <name type="ordered locus">BH2782</name>
</gene>
<protein>
    <recommendedName>
        <fullName evidence="1">Exodeoxyribonuclease 7 small subunit</fullName>
        <ecNumber evidence="1">3.1.11.6</ecNumber>
    </recommendedName>
    <alternativeName>
        <fullName evidence="1">Exodeoxyribonuclease VII small subunit</fullName>
        <shortName evidence="1">Exonuclease VII small subunit</shortName>
    </alternativeName>
</protein>
<evidence type="ECO:0000255" key="1">
    <source>
        <dbReference type="HAMAP-Rule" id="MF_00337"/>
    </source>
</evidence>
<evidence type="ECO:0000305" key="2"/>
<organism>
    <name type="scientific">Halalkalibacterium halodurans (strain ATCC BAA-125 / DSM 18197 / FERM 7344 / JCM 9153 / C-125)</name>
    <name type="common">Bacillus halodurans</name>
    <dbReference type="NCBI Taxonomy" id="272558"/>
    <lineage>
        <taxon>Bacteria</taxon>
        <taxon>Bacillati</taxon>
        <taxon>Bacillota</taxon>
        <taxon>Bacilli</taxon>
        <taxon>Bacillales</taxon>
        <taxon>Bacillaceae</taxon>
        <taxon>Halalkalibacterium (ex Joshi et al. 2022)</taxon>
    </lineage>
</organism>
<name>EX7S_HALH5</name>
<comment type="function">
    <text evidence="1">Bidirectionally degrades single-stranded DNA into large acid-insoluble oligonucleotides, which are then degraded further into small acid-soluble oligonucleotides.</text>
</comment>
<comment type="catalytic activity">
    <reaction evidence="1">
        <text>Exonucleolytic cleavage in either 5'- to 3'- or 3'- to 5'-direction to yield nucleoside 5'-phosphates.</text>
        <dbReference type="EC" id="3.1.11.6"/>
    </reaction>
</comment>
<comment type="subunit">
    <text evidence="1">Heterooligomer composed of large and small subunits.</text>
</comment>
<comment type="subcellular location">
    <subcellularLocation>
        <location evidence="1">Cytoplasm</location>
    </subcellularLocation>
</comment>
<comment type="similarity">
    <text evidence="1 2">Belongs to the XseB family.</text>
</comment>
<feature type="chain" id="PRO_0000206917" description="Exodeoxyribonuclease 7 small subunit">
    <location>
        <begin position="1"/>
        <end position="80"/>
    </location>
</feature>
<keyword id="KW-0963">Cytoplasm</keyword>
<keyword id="KW-0269">Exonuclease</keyword>
<keyword id="KW-0378">Hydrolase</keyword>
<keyword id="KW-0540">Nuclease</keyword>
<keyword id="KW-1185">Reference proteome</keyword>
<reference key="1">
    <citation type="journal article" date="2000" name="Nucleic Acids Res.">
        <title>Complete genome sequence of the alkaliphilic bacterium Bacillus halodurans and genomic sequence comparison with Bacillus subtilis.</title>
        <authorList>
            <person name="Takami H."/>
            <person name="Nakasone K."/>
            <person name="Takaki Y."/>
            <person name="Maeno G."/>
            <person name="Sasaki R."/>
            <person name="Masui N."/>
            <person name="Fuji F."/>
            <person name="Hirama C."/>
            <person name="Nakamura Y."/>
            <person name="Ogasawara N."/>
            <person name="Kuhara S."/>
            <person name="Horikoshi K."/>
        </authorList>
    </citation>
    <scope>NUCLEOTIDE SEQUENCE [LARGE SCALE GENOMIC DNA]</scope>
    <source>
        <strain>ATCC BAA-125 / DSM 18197 / FERM 7344 / JCM 9153 / C-125</strain>
    </source>
</reference>
<sequence>MIKNEQPPLSFEEAMEQLEEVVEQLEQGDVPLEEAISMFQKGMNLSKVCHEKLATVEKQMDQILKEDGNFEETVLQEEQE</sequence>
<dbReference type="EC" id="3.1.11.6" evidence="1"/>
<dbReference type="EMBL" id="BA000004">
    <property type="protein sequence ID" value="BAB06501.1"/>
    <property type="molecule type" value="Genomic_DNA"/>
</dbReference>
<dbReference type="PIR" id="F83997">
    <property type="entry name" value="F83997"/>
</dbReference>
<dbReference type="RefSeq" id="WP_010898930.1">
    <property type="nucleotide sequence ID" value="NC_002570.2"/>
</dbReference>
<dbReference type="SMR" id="Q9K968"/>
<dbReference type="STRING" id="272558.gene:10728682"/>
<dbReference type="DNASU" id="893413"/>
<dbReference type="GeneID" id="87598300"/>
<dbReference type="KEGG" id="bha:BH2782"/>
<dbReference type="eggNOG" id="COG1722">
    <property type="taxonomic scope" value="Bacteria"/>
</dbReference>
<dbReference type="HOGENOM" id="CLU_145918_3_1_9"/>
<dbReference type="OrthoDB" id="9798666at2"/>
<dbReference type="Proteomes" id="UP000001258">
    <property type="component" value="Chromosome"/>
</dbReference>
<dbReference type="GO" id="GO:0005829">
    <property type="term" value="C:cytosol"/>
    <property type="evidence" value="ECO:0007669"/>
    <property type="project" value="TreeGrafter"/>
</dbReference>
<dbReference type="GO" id="GO:0009318">
    <property type="term" value="C:exodeoxyribonuclease VII complex"/>
    <property type="evidence" value="ECO:0007669"/>
    <property type="project" value="InterPro"/>
</dbReference>
<dbReference type="GO" id="GO:0008855">
    <property type="term" value="F:exodeoxyribonuclease VII activity"/>
    <property type="evidence" value="ECO:0007669"/>
    <property type="project" value="UniProtKB-UniRule"/>
</dbReference>
<dbReference type="GO" id="GO:0006308">
    <property type="term" value="P:DNA catabolic process"/>
    <property type="evidence" value="ECO:0007669"/>
    <property type="project" value="UniProtKB-UniRule"/>
</dbReference>
<dbReference type="Gene3D" id="1.10.287.1040">
    <property type="entry name" value="Exonuclease VII, small subunit"/>
    <property type="match status" value="1"/>
</dbReference>
<dbReference type="HAMAP" id="MF_00337">
    <property type="entry name" value="Exonuc_7_S"/>
    <property type="match status" value="1"/>
</dbReference>
<dbReference type="InterPro" id="IPR003761">
    <property type="entry name" value="Exonuc_VII_S"/>
</dbReference>
<dbReference type="InterPro" id="IPR037004">
    <property type="entry name" value="Exonuc_VII_ssu_sf"/>
</dbReference>
<dbReference type="NCBIfam" id="NF002139">
    <property type="entry name" value="PRK00977.1-3"/>
    <property type="match status" value="1"/>
</dbReference>
<dbReference type="NCBIfam" id="TIGR01280">
    <property type="entry name" value="xseB"/>
    <property type="match status" value="1"/>
</dbReference>
<dbReference type="PANTHER" id="PTHR34137">
    <property type="entry name" value="EXODEOXYRIBONUCLEASE 7 SMALL SUBUNIT"/>
    <property type="match status" value="1"/>
</dbReference>
<dbReference type="PANTHER" id="PTHR34137:SF1">
    <property type="entry name" value="EXODEOXYRIBONUCLEASE 7 SMALL SUBUNIT"/>
    <property type="match status" value="1"/>
</dbReference>
<dbReference type="Pfam" id="PF02609">
    <property type="entry name" value="Exonuc_VII_S"/>
    <property type="match status" value="1"/>
</dbReference>
<dbReference type="PIRSF" id="PIRSF006488">
    <property type="entry name" value="Exonuc_VII_S"/>
    <property type="match status" value="1"/>
</dbReference>
<dbReference type="SUPFAM" id="SSF116842">
    <property type="entry name" value="XseB-like"/>
    <property type="match status" value="1"/>
</dbReference>
<proteinExistence type="inferred from homology"/>
<accession>Q9K968</accession>